<dbReference type="EC" id="5.6.2.4" evidence="1"/>
<dbReference type="EMBL" id="M20219">
    <property type="protein sequence ID" value="AAA66833.1"/>
    <property type="molecule type" value="Genomic_DNA"/>
</dbReference>
<dbReference type="PIR" id="C31169">
    <property type="entry name" value="W1WLB2"/>
</dbReference>
<dbReference type="SMR" id="P11298"/>
<dbReference type="IntAct" id="P11298">
    <property type="interactions" value="1"/>
</dbReference>
<dbReference type="MINT" id="P11298"/>
<dbReference type="Proteomes" id="UP000007612">
    <property type="component" value="Segment"/>
</dbReference>
<dbReference type="GO" id="GO:0042025">
    <property type="term" value="C:host cell nucleus"/>
    <property type="evidence" value="ECO:0007669"/>
    <property type="project" value="UniProtKB-SubCell"/>
</dbReference>
<dbReference type="GO" id="GO:0005524">
    <property type="term" value="F:ATP binding"/>
    <property type="evidence" value="ECO:0007669"/>
    <property type="project" value="UniProtKB-UniRule"/>
</dbReference>
<dbReference type="GO" id="GO:0016887">
    <property type="term" value="F:ATP hydrolysis activity"/>
    <property type="evidence" value="ECO:0007669"/>
    <property type="project" value="RHEA"/>
</dbReference>
<dbReference type="GO" id="GO:0003677">
    <property type="term" value="F:DNA binding"/>
    <property type="evidence" value="ECO:0007669"/>
    <property type="project" value="UniProtKB-UniRule"/>
</dbReference>
<dbReference type="GO" id="GO:0003678">
    <property type="term" value="F:DNA helicase activity"/>
    <property type="evidence" value="ECO:0007669"/>
    <property type="project" value="UniProtKB-UniRule"/>
</dbReference>
<dbReference type="GO" id="GO:0006260">
    <property type="term" value="P:DNA replication"/>
    <property type="evidence" value="ECO:0007669"/>
    <property type="project" value="UniProtKB-UniRule"/>
</dbReference>
<dbReference type="Gene3D" id="3.40.1310.10">
    <property type="match status" value="1"/>
</dbReference>
<dbReference type="Gene3D" id="3.40.50.300">
    <property type="entry name" value="P-loop containing nucleotide triphosphate hydrolases"/>
    <property type="match status" value="1"/>
</dbReference>
<dbReference type="Gene3D" id="1.10.10.510">
    <property type="entry name" value="Zinc finger, large T-antigen D1 domain"/>
    <property type="match status" value="1"/>
</dbReference>
<dbReference type="HAMAP" id="MF_04000">
    <property type="entry name" value="PPV_E1"/>
    <property type="match status" value="1"/>
</dbReference>
<dbReference type="InterPro" id="IPR014015">
    <property type="entry name" value="Helicase_SF3_DNA-vir"/>
</dbReference>
<dbReference type="InterPro" id="IPR027417">
    <property type="entry name" value="P-loop_NTPase"/>
</dbReference>
<dbReference type="InterPro" id="IPR001177">
    <property type="entry name" value="PPV_DNA_helicase_E1_C"/>
</dbReference>
<dbReference type="InterPro" id="IPR014000">
    <property type="entry name" value="PPV_DNA_helicase_E1_N"/>
</dbReference>
<dbReference type="InterPro" id="IPR046832">
    <property type="entry name" value="PPV_E1_DBD"/>
</dbReference>
<dbReference type="InterPro" id="IPR046935">
    <property type="entry name" value="PPV_E1_DBD_sf"/>
</dbReference>
<dbReference type="InterPro" id="IPR016393">
    <property type="entry name" value="Rep_E1_papillomaV"/>
</dbReference>
<dbReference type="InterPro" id="IPR037102">
    <property type="entry name" value="Znf_lg_T-Ag_D1_dom_sf"/>
</dbReference>
<dbReference type="Pfam" id="PF00519">
    <property type="entry name" value="PPV_E1_C"/>
    <property type="match status" value="1"/>
</dbReference>
<dbReference type="Pfam" id="PF20450">
    <property type="entry name" value="PPV_E1_DBD"/>
    <property type="match status" value="1"/>
</dbReference>
<dbReference type="Pfam" id="PF00524">
    <property type="entry name" value="PPV_E1_N"/>
    <property type="match status" value="1"/>
</dbReference>
<dbReference type="PIRSF" id="PIRSF003383">
    <property type="entry name" value="Rep_E1_papillomaV"/>
    <property type="match status" value="1"/>
</dbReference>
<dbReference type="SUPFAM" id="SSF55464">
    <property type="entry name" value="Origin of replication-binding domain, RBD-like"/>
    <property type="match status" value="1"/>
</dbReference>
<dbReference type="SUPFAM" id="SSF52540">
    <property type="entry name" value="P-loop containing nucleoside triphosphate hydrolases"/>
    <property type="match status" value="1"/>
</dbReference>
<dbReference type="PROSITE" id="PS51206">
    <property type="entry name" value="SF3_HELICASE_1"/>
    <property type="match status" value="1"/>
</dbReference>
<keyword id="KW-0067">ATP-binding</keyword>
<keyword id="KW-0235">DNA replication</keyword>
<keyword id="KW-0238">DNA-binding</keyword>
<keyword id="KW-0244">Early protein</keyword>
<keyword id="KW-0347">Helicase</keyword>
<keyword id="KW-1048">Host nucleus</keyword>
<keyword id="KW-0378">Hydrolase</keyword>
<keyword id="KW-0413">Isomerase</keyword>
<keyword id="KW-1017">Isopeptide bond</keyword>
<keyword id="KW-0547">Nucleotide-binding</keyword>
<keyword id="KW-0597">Phosphoprotein</keyword>
<keyword id="KW-0832">Ubl conjugation</keyword>
<accession>P11298</accession>
<evidence type="ECO:0000255" key="1">
    <source>
        <dbReference type="HAMAP-Rule" id="MF_04000"/>
    </source>
</evidence>
<evidence type="ECO:0000256" key="2">
    <source>
        <dbReference type="SAM" id="MobiDB-lite"/>
    </source>
</evidence>
<sequence>MANDKGSNWDSALGCSYLLTEAECESDKENEEPGAGVELSVESDRYDSQDEDFLDNASVFQGNHLEVFQALEKKAGEEQLLNLKRKVLGSSENSSGSEASETPAKRQKAGAKRRLFSENEANRVLTPLQVQGGEWRQGFNEDQAISHRLLQLVKSKNATVFKLGLFKSLFLCSFHDLTRLFKNDKTTNQQWVLAVFGIAEVFFEASLELLKKQCSFVQMQKRSHEGGTCAVYLLCFNTAKSRETVRNLMANMLNVREECLLMQPPKIRGLSAALFWFKSSLSPATLKHGALPEWIRAQTTLHDSLATEKFDFGTMVQWAYDHKYAEESKIAYEYALAAGSDSNARAFLATNSQAKHVKDCATMVRHYLRAETQALSMPAYIKTRCKLATGEGSWKSILTFFNYQNIELITFINALKLWLNGIPKKNCLAFIGPPKTGKSMLCNSLIHFLGGSVLSFANHKSHFWLASLADARAALVDDATHACWRYFDTYLRNALDGYPVSIDRKHKAAVQIKAPPLLVTSNIDVQAEERYLYLHSRVQTFRFEQPCTDESGEQPFTITDADWKSFFVRLWGRLDLVDEEEDSEEDGDSMRTFTCSARNTNAVD</sequence>
<protein>
    <recommendedName>
        <fullName evidence="1">Replication protein E1</fullName>
        <ecNumber evidence="1">5.6.2.4</ecNumber>
    </recommendedName>
    <alternativeName>
        <fullName evidence="1">ATP-dependent helicase E1</fullName>
    </alternativeName>
    <alternativeName>
        <fullName evidence="1">DNA 3'-5' helicase E1</fullName>
    </alternativeName>
</protein>
<comment type="function">
    <text evidence="1">ATP-dependent DNA 3'-5' helicase required for initiation of viral DNA replication. It forms a complex with the viral E2 protein. The E1-E2 complex binds to the replication origin which contains binding sites for both proteins. During the initial step, a dimer of E1 interacts with a dimer of protein E2 leading to a complex that binds the viral origin of replication with high specificity. Then, a second dimer of E1 displaces the E2 dimer in an ATP-dependent manner to form the E1 tetramer. Following this, two E1 monomers are added to each half of the site, which results in the formation of two E1 trimers on the viral ori. Subsequently, two hexamers will be created. The double hexamer acts as a bi-directional helicase machinery and unwinds the viral DNA and then recruits the host DNA polymerase to start replication.</text>
</comment>
<comment type="catalytic activity">
    <reaction evidence="1">
        <text>Couples ATP hydrolysis with the unwinding of duplex DNA by translocating in the 3'-5' direction.</text>
        <dbReference type="EC" id="5.6.2.4"/>
    </reaction>
</comment>
<comment type="catalytic activity">
    <reaction evidence="1">
        <text>ATP + H2O = ADP + phosphate + H(+)</text>
        <dbReference type="Rhea" id="RHEA:13065"/>
        <dbReference type="ChEBI" id="CHEBI:15377"/>
        <dbReference type="ChEBI" id="CHEBI:15378"/>
        <dbReference type="ChEBI" id="CHEBI:30616"/>
        <dbReference type="ChEBI" id="CHEBI:43474"/>
        <dbReference type="ChEBI" id="CHEBI:456216"/>
        <dbReference type="EC" id="5.6.2.4"/>
    </reaction>
</comment>
<comment type="subunit">
    <text evidence="1">Can form hexamers. Interacts with E2 protein; this interaction increases E1 DNA binding specificity. Interacts with host DNA polymerase subunit POLA2. Interacts with host single stranded DNA-binding protein RPA1. Interacts with host TOP1; this interaction stimulates the enzymatic activity of TOP1.</text>
</comment>
<comment type="subcellular location">
    <subcellularLocation>
        <location evidence="1">Host nucleus</location>
    </subcellularLocation>
</comment>
<comment type="PTM">
    <text evidence="1">Phosphorylated.</text>
</comment>
<comment type="PTM">
    <text evidence="1">Sumoylated.</text>
</comment>
<comment type="similarity">
    <text evidence="1">Belongs to the papillomaviridae E1 protein family.</text>
</comment>
<reference key="1">
    <citation type="submission" date="1988-05" db="EMBL/GenBank/DDBJ databases">
        <authorList>
            <person name="Groff D.E."/>
            <person name="Mitra R."/>
            <person name="Lancaster W.D."/>
        </authorList>
    </citation>
    <scope>NUCLEOTIDE SEQUENCE [GENOMIC DNA]</scope>
</reference>
<organismHost>
    <name type="scientific">Bos taurus</name>
    <name type="common">Bovine</name>
    <dbReference type="NCBI Taxonomy" id="9913"/>
</organismHost>
<name>VE1_BPV2</name>
<feature type="chain" id="PRO_0000133091" description="Replication protein E1">
    <location>
        <begin position="1"/>
        <end position="604"/>
    </location>
</feature>
<feature type="domain" description="SF3 helicase" evidence="1">
    <location>
        <begin position="406"/>
        <end position="556"/>
    </location>
</feature>
<feature type="region of interest" description="Disordered" evidence="2">
    <location>
        <begin position="24"/>
        <end position="48"/>
    </location>
</feature>
<feature type="region of interest" description="Disordered" evidence="2">
    <location>
        <begin position="90"/>
        <end position="112"/>
    </location>
</feature>
<feature type="region of interest" description="DNA-binding region" evidence="1">
    <location>
        <begin position="141"/>
        <end position="307"/>
    </location>
</feature>
<feature type="region of interest" description="Disordered" evidence="2">
    <location>
        <begin position="581"/>
        <end position="604"/>
    </location>
</feature>
<feature type="short sequence motif" description="Nuclear localization signal" evidence="1">
    <location>
        <begin position="84"/>
        <end position="86"/>
    </location>
</feature>
<feature type="compositionally biased region" description="Low complexity" evidence="2">
    <location>
        <begin position="90"/>
        <end position="101"/>
    </location>
</feature>
<feature type="compositionally biased region" description="Polar residues" evidence="2">
    <location>
        <begin position="591"/>
        <end position="604"/>
    </location>
</feature>
<feature type="binding site" evidence="1">
    <location>
        <begin position="432"/>
        <end position="439"/>
    </location>
    <ligand>
        <name>ATP</name>
        <dbReference type="ChEBI" id="CHEBI:30616"/>
    </ligand>
</feature>
<feature type="modified residue" description="Phosphoserine; by host" evidence="1">
    <location>
        <position position="90"/>
    </location>
</feature>
<feature type="modified residue" description="Phosphoserine; by host" evidence="1">
    <location>
        <position position="94"/>
    </location>
</feature>
<feature type="cross-link" description="Glycyl lysine isopeptide (Lys-Gly) (interchain with G-Cter in SUMO)" evidence="1">
    <location>
        <position position="513"/>
    </location>
</feature>
<gene>
    <name evidence="1" type="primary">E1</name>
</gene>
<organism>
    <name type="scientific">Bos taurus papillomavirus 2</name>
    <name type="common">Bovine papillomavirus 2</name>
    <dbReference type="NCBI Taxonomy" id="2758382"/>
    <lineage>
        <taxon>Viruses</taxon>
        <taxon>Monodnaviria</taxon>
        <taxon>Shotokuvirae</taxon>
        <taxon>Cossaviricota</taxon>
        <taxon>Papovaviricetes</taxon>
        <taxon>Zurhausenvirales</taxon>
        <taxon>Papillomaviridae</taxon>
        <taxon>Firstpapillomavirinae</taxon>
        <taxon>Deltapapillomavirus</taxon>
        <taxon>Bovine papillomavirus type 1</taxon>
    </lineage>
</organism>
<proteinExistence type="inferred from homology"/>